<comment type="function">
    <text evidence="1">Catalyzes the NADPH-dependent reduction of 7-cyano-7-deazaguanine (preQ0) to 7-aminomethyl-7-deazaguanine (preQ1).</text>
</comment>
<comment type="catalytic activity">
    <reaction evidence="1">
        <text>7-aminomethyl-7-carbaguanine + 2 NADP(+) = 7-cyano-7-deazaguanine + 2 NADPH + 3 H(+)</text>
        <dbReference type="Rhea" id="RHEA:13409"/>
        <dbReference type="ChEBI" id="CHEBI:15378"/>
        <dbReference type="ChEBI" id="CHEBI:45075"/>
        <dbReference type="ChEBI" id="CHEBI:57783"/>
        <dbReference type="ChEBI" id="CHEBI:58349"/>
        <dbReference type="ChEBI" id="CHEBI:58703"/>
        <dbReference type="EC" id="1.7.1.13"/>
    </reaction>
</comment>
<comment type="pathway">
    <text evidence="1">tRNA modification; tRNA-queuosine biosynthesis.</text>
</comment>
<comment type="subcellular location">
    <subcellularLocation>
        <location evidence="1">Cytoplasm</location>
    </subcellularLocation>
</comment>
<comment type="similarity">
    <text evidence="1">Belongs to the GTP cyclohydrolase I family. QueF type 1 subfamily.</text>
</comment>
<accession>B8JAR2</accession>
<evidence type="ECO:0000255" key="1">
    <source>
        <dbReference type="HAMAP-Rule" id="MF_00818"/>
    </source>
</evidence>
<protein>
    <recommendedName>
        <fullName evidence="1">NADPH-dependent 7-cyano-7-deazaguanine reductase</fullName>
        <ecNumber evidence="1">1.7.1.13</ecNumber>
    </recommendedName>
    <alternativeName>
        <fullName evidence="1">7-cyano-7-carbaguanine reductase</fullName>
    </alternativeName>
    <alternativeName>
        <fullName evidence="1">NADPH-dependent nitrile oxidoreductase</fullName>
    </alternativeName>
    <alternativeName>
        <fullName evidence="1">PreQ(0) reductase</fullName>
    </alternativeName>
</protein>
<keyword id="KW-0963">Cytoplasm</keyword>
<keyword id="KW-0521">NADP</keyword>
<keyword id="KW-0560">Oxidoreductase</keyword>
<keyword id="KW-0671">Queuosine biosynthesis</keyword>
<gene>
    <name evidence="1" type="primary">queF</name>
    <name type="ordered locus">A2cp1_4244</name>
</gene>
<dbReference type="EC" id="1.7.1.13" evidence="1"/>
<dbReference type="EMBL" id="CP001359">
    <property type="protein sequence ID" value="ACL67561.1"/>
    <property type="molecule type" value="Genomic_DNA"/>
</dbReference>
<dbReference type="RefSeq" id="WP_012528175.1">
    <property type="nucleotide sequence ID" value="NC_011891.1"/>
</dbReference>
<dbReference type="SMR" id="B8JAR2"/>
<dbReference type="KEGG" id="acp:A2cp1_4244"/>
<dbReference type="HOGENOM" id="CLU_102489_1_0_7"/>
<dbReference type="UniPathway" id="UPA00392"/>
<dbReference type="Proteomes" id="UP000007089">
    <property type="component" value="Chromosome"/>
</dbReference>
<dbReference type="GO" id="GO:0005737">
    <property type="term" value="C:cytoplasm"/>
    <property type="evidence" value="ECO:0007669"/>
    <property type="project" value="UniProtKB-SubCell"/>
</dbReference>
<dbReference type="GO" id="GO:0033739">
    <property type="term" value="F:preQ1 synthase activity"/>
    <property type="evidence" value="ECO:0007669"/>
    <property type="project" value="UniProtKB-UniRule"/>
</dbReference>
<dbReference type="GO" id="GO:0008616">
    <property type="term" value="P:queuosine biosynthetic process"/>
    <property type="evidence" value="ECO:0007669"/>
    <property type="project" value="UniProtKB-UniRule"/>
</dbReference>
<dbReference type="GO" id="GO:0006400">
    <property type="term" value="P:tRNA modification"/>
    <property type="evidence" value="ECO:0007669"/>
    <property type="project" value="UniProtKB-UniRule"/>
</dbReference>
<dbReference type="Gene3D" id="3.30.1130.10">
    <property type="match status" value="1"/>
</dbReference>
<dbReference type="HAMAP" id="MF_00818">
    <property type="entry name" value="QueF_type1"/>
    <property type="match status" value="1"/>
</dbReference>
<dbReference type="InterPro" id="IPR043133">
    <property type="entry name" value="GTP-CH-I_C/QueF"/>
</dbReference>
<dbReference type="InterPro" id="IPR050084">
    <property type="entry name" value="NADPH_dep_7-cyano-7-deazaG_red"/>
</dbReference>
<dbReference type="InterPro" id="IPR029500">
    <property type="entry name" value="QueF"/>
</dbReference>
<dbReference type="InterPro" id="IPR016856">
    <property type="entry name" value="QueF_type1"/>
</dbReference>
<dbReference type="NCBIfam" id="TIGR03139">
    <property type="entry name" value="QueF-II"/>
    <property type="match status" value="1"/>
</dbReference>
<dbReference type="PANTHER" id="PTHR34354">
    <property type="entry name" value="NADPH-DEPENDENT 7-CYANO-7-DEAZAGUANINE REDUCTASE"/>
    <property type="match status" value="1"/>
</dbReference>
<dbReference type="PANTHER" id="PTHR34354:SF1">
    <property type="entry name" value="NADPH-DEPENDENT 7-CYANO-7-DEAZAGUANINE REDUCTASE"/>
    <property type="match status" value="1"/>
</dbReference>
<dbReference type="Pfam" id="PF14489">
    <property type="entry name" value="QueF"/>
    <property type="match status" value="1"/>
</dbReference>
<dbReference type="PIRSF" id="PIRSF027377">
    <property type="entry name" value="Nitrile_oxidored_QueF"/>
    <property type="match status" value="1"/>
</dbReference>
<dbReference type="SUPFAM" id="SSF55620">
    <property type="entry name" value="Tetrahydrobiopterin biosynthesis enzymes-like"/>
    <property type="match status" value="1"/>
</dbReference>
<sequence>MPTQPSRDLQTFPNPKPGRPFEIAMECPEFTCVCPMTGQPDFATIRLRYVPAERCVELKSLKLYLWSFRNEGTFHEAVTNRICDDLVAALAPRWIEVVGDFAVRGGIHTVVTARHGERPAGV</sequence>
<reference key="1">
    <citation type="submission" date="2009-01" db="EMBL/GenBank/DDBJ databases">
        <title>Complete sequence of Anaeromyxobacter dehalogenans 2CP-1.</title>
        <authorList>
            <person name="Lucas S."/>
            <person name="Copeland A."/>
            <person name="Lapidus A."/>
            <person name="Glavina del Rio T."/>
            <person name="Dalin E."/>
            <person name="Tice H."/>
            <person name="Bruce D."/>
            <person name="Goodwin L."/>
            <person name="Pitluck S."/>
            <person name="Saunders E."/>
            <person name="Brettin T."/>
            <person name="Detter J.C."/>
            <person name="Han C."/>
            <person name="Larimer F."/>
            <person name="Land M."/>
            <person name="Hauser L."/>
            <person name="Kyrpides N."/>
            <person name="Ovchinnikova G."/>
            <person name="Beliaev A.S."/>
            <person name="Richardson P."/>
        </authorList>
    </citation>
    <scope>NUCLEOTIDE SEQUENCE [LARGE SCALE GENOMIC DNA]</scope>
    <source>
        <strain>2CP-1 / ATCC BAA-258</strain>
    </source>
</reference>
<proteinExistence type="inferred from homology"/>
<name>QUEF_ANAD2</name>
<organism>
    <name type="scientific">Anaeromyxobacter dehalogenans (strain 2CP-1 / ATCC BAA-258)</name>
    <dbReference type="NCBI Taxonomy" id="455488"/>
    <lineage>
        <taxon>Bacteria</taxon>
        <taxon>Pseudomonadati</taxon>
        <taxon>Myxococcota</taxon>
        <taxon>Myxococcia</taxon>
        <taxon>Myxococcales</taxon>
        <taxon>Cystobacterineae</taxon>
        <taxon>Anaeromyxobacteraceae</taxon>
        <taxon>Anaeromyxobacter</taxon>
    </lineage>
</organism>
<feature type="chain" id="PRO_1000148662" description="NADPH-dependent 7-cyano-7-deazaguanine reductase">
    <location>
        <begin position="1"/>
        <end position="122"/>
    </location>
</feature>
<feature type="active site" description="Thioimide intermediate" evidence="1">
    <location>
        <position position="34"/>
    </location>
</feature>
<feature type="active site" description="Proton donor" evidence="1">
    <location>
        <position position="41"/>
    </location>
</feature>
<feature type="binding site" evidence="1">
    <location>
        <begin position="56"/>
        <end position="58"/>
    </location>
    <ligand>
        <name>substrate</name>
    </ligand>
</feature>
<feature type="binding site" evidence="1">
    <location>
        <begin position="75"/>
        <end position="76"/>
    </location>
    <ligand>
        <name>substrate</name>
    </ligand>
</feature>